<dbReference type="EC" id="6.1.1.1" evidence="1"/>
<dbReference type="EMBL" id="AE004091">
    <property type="protein sequence ID" value="AAG07525.1"/>
    <property type="molecule type" value="Genomic_DNA"/>
</dbReference>
<dbReference type="PIR" id="A83129">
    <property type="entry name" value="A83129"/>
</dbReference>
<dbReference type="SMR" id="Q9HWP3"/>
<dbReference type="FunCoup" id="Q9HWP3">
    <property type="interactions" value="735"/>
</dbReference>
<dbReference type="STRING" id="208964.PA4138"/>
<dbReference type="PaxDb" id="208964-PA4138"/>
<dbReference type="KEGG" id="pae:PA4138"/>
<dbReference type="PATRIC" id="fig|208964.12.peg.4336"/>
<dbReference type="PseudoCAP" id="PA4138"/>
<dbReference type="HOGENOM" id="CLU_024003_0_3_6"/>
<dbReference type="InParanoid" id="Q9HWP3"/>
<dbReference type="OrthoDB" id="9804243at2"/>
<dbReference type="PhylomeDB" id="Q9HWP3"/>
<dbReference type="BioCyc" id="PAER208964:G1FZ6-4211-MONOMER"/>
<dbReference type="BRENDA" id="6.1.1.1">
    <property type="organism ID" value="5087"/>
</dbReference>
<dbReference type="Proteomes" id="UP000002438">
    <property type="component" value="Chromosome"/>
</dbReference>
<dbReference type="GO" id="GO:0005829">
    <property type="term" value="C:cytosol"/>
    <property type="evidence" value="ECO:0000318"/>
    <property type="project" value="GO_Central"/>
</dbReference>
<dbReference type="GO" id="GO:0005524">
    <property type="term" value="F:ATP binding"/>
    <property type="evidence" value="ECO:0007669"/>
    <property type="project" value="UniProtKB-UniRule"/>
</dbReference>
<dbReference type="GO" id="GO:0003723">
    <property type="term" value="F:RNA binding"/>
    <property type="evidence" value="ECO:0007669"/>
    <property type="project" value="UniProtKB-KW"/>
</dbReference>
<dbReference type="GO" id="GO:0004831">
    <property type="term" value="F:tyrosine-tRNA ligase activity"/>
    <property type="evidence" value="ECO:0000318"/>
    <property type="project" value="GO_Central"/>
</dbReference>
<dbReference type="GO" id="GO:0043039">
    <property type="term" value="P:tRNA aminoacylation"/>
    <property type="evidence" value="ECO:0000318"/>
    <property type="project" value="GO_Central"/>
</dbReference>
<dbReference type="GO" id="GO:0006437">
    <property type="term" value="P:tyrosyl-tRNA aminoacylation"/>
    <property type="evidence" value="ECO:0007669"/>
    <property type="project" value="UniProtKB-UniRule"/>
</dbReference>
<dbReference type="CDD" id="cd00805">
    <property type="entry name" value="TyrRS_core"/>
    <property type="match status" value="1"/>
</dbReference>
<dbReference type="FunFam" id="1.10.240.10:FF:000001">
    <property type="entry name" value="Tyrosine--tRNA ligase"/>
    <property type="match status" value="1"/>
</dbReference>
<dbReference type="Gene3D" id="3.40.50.620">
    <property type="entry name" value="HUPs"/>
    <property type="match status" value="1"/>
</dbReference>
<dbReference type="Gene3D" id="3.10.290.10">
    <property type="entry name" value="RNA-binding S4 domain"/>
    <property type="match status" value="1"/>
</dbReference>
<dbReference type="Gene3D" id="1.10.240.10">
    <property type="entry name" value="Tyrosyl-Transfer RNA Synthetase"/>
    <property type="match status" value="1"/>
</dbReference>
<dbReference type="HAMAP" id="MF_02006">
    <property type="entry name" value="Tyr_tRNA_synth_type1"/>
    <property type="match status" value="1"/>
</dbReference>
<dbReference type="InterPro" id="IPR002305">
    <property type="entry name" value="aa-tRNA-synth_Ic"/>
</dbReference>
<dbReference type="InterPro" id="IPR014729">
    <property type="entry name" value="Rossmann-like_a/b/a_fold"/>
</dbReference>
<dbReference type="InterPro" id="IPR036986">
    <property type="entry name" value="S4_RNA-bd_sf"/>
</dbReference>
<dbReference type="InterPro" id="IPR002307">
    <property type="entry name" value="Tyr-tRNA-ligase"/>
</dbReference>
<dbReference type="InterPro" id="IPR024088">
    <property type="entry name" value="Tyr-tRNA-ligase_bac-type"/>
</dbReference>
<dbReference type="InterPro" id="IPR024107">
    <property type="entry name" value="Tyr-tRNA-ligase_bac_1"/>
</dbReference>
<dbReference type="NCBIfam" id="TIGR00234">
    <property type="entry name" value="tyrS"/>
    <property type="match status" value="1"/>
</dbReference>
<dbReference type="PANTHER" id="PTHR11766:SF0">
    <property type="entry name" value="TYROSINE--TRNA LIGASE, MITOCHONDRIAL"/>
    <property type="match status" value="1"/>
</dbReference>
<dbReference type="PANTHER" id="PTHR11766">
    <property type="entry name" value="TYROSYL-TRNA SYNTHETASE"/>
    <property type="match status" value="1"/>
</dbReference>
<dbReference type="Pfam" id="PF00579">
    <property type="entry name" value="tRNA-synt_1b"/>
    <property type="match status" value="1"/>
</dbReference>
<dbReference type="PRINTS" id="PR01040">
    <property type="entry name" value="TRNASYNTHTYR"/>
</dbReference>
<dbReference type="SUPFAM" id="SSF55174">
    <property type="entry name" value="Alpha-L RNA-binding motif"/>
    <property type="match status" value="1"/>
</dbReference>
<dbReference type="SUPFAM" id="SSF52374">
    <property type="entry name" value="Nucleotidylyl transferase"/>
    <property type="match status" value="1"/>
</dbReference>
<dbReference type="PROSITE" id="PS50889">
    <property type="entry name" value="S4"/>
    <property type="match status" value="1"/>
</dbReference>
<reference key="1">
    <citation type="journal article" date="2000" name="Nature">
        <title>Complete genome sequence of Pseudomonas aeruginosa PAO1, an opportunistic pathogen.</title>
        <authorList>
            <person name="Stover C.K."/>
            <person name="Pham X.-Q.T."/>
            <person name="Erwin A.L."/>
            <person name="Mizoguchi S.D."/>
            <person name="Warrener P."/>
            <person name="Hickey M.J."/>
            <person name="Brinkman F.S.L."/>
            <person name="Hufnagle W.O."/>
            <person name="Kowalik D.J."/>
            <person name="Lagrou M."/>
            <person name="Garber R.L."/>
            <person name="Goltry L."/>
            <person name="Tolentino E."/>
            <person name="Westbrock-Wadman S."/>
            <person name="Yuan Y."/>
            <person name="Brody L.L."/>
            <person name="Coulter S.N."/>
            <person name="Folger K.R."/>
            <person name="Kas A."/>
            <person name="Larbig K."/>
            <person name="Lim R.M."/>
            <person name="Smith K.A."/>
            <person name="Spencer D.H."/>
            <person name="Wong G.K.-S."/>
            <person name="Wu Z."/>
            <person name="Paulsen I.T."/>
            <person name="Reizer J."/>
            <person name="Saier M.H. Jr."/>
            <person name="Hancock R.E.W."/>
            <person name="Lory S."/>
            <person name="Olson M.V."/>
        </authorList>
    </citation>
    <scope>NUCLEOTIDE SEQUENCE [LARGE SCALE GENOMIC DNA]</scope>
    <source>
        <strain>ATCC 15692 / DSM 22644 / CIP 104116 / JCM 14847 / LMG 12228 / 1C / PRS 101 / PAO1</strain>
    </source>
</reference>
<proteinExistence type="inferred from homology"/>
<comment type="function">
    <text evidence="1">Catalyzes the attachment of tyrosine to tRNA(Tyr) in a two-step reaction: tyrosine is first activated by ATP to form Tyr-AMP and then transferred to the acceptor end of tRNA(Tyr).</text>
</comment>
<comment type="catalytic activity">
    <reaction evidence="1">
        <text>tRNA(Tyr) + L-tyrosine + ATP = L-tyrosyl-tRNA(Tyr) + AMP + diphosphate + H(+)</text>
        <dbReference type="Rhea" id="RHEA:10220"/>
        <dbReference type="Rhea" id="RHEA-COMP:9706"/>
        <dbReference type="Rhea" id="RHEA-COMP:9707"/>
        <dbReference type="ChEBI" id="CHEBI:15378"/>
        <dbReference type="ChEBI" id="CHEBI:30616"/>
        <dbReference type="ChEBI" id="CHEBI:33019"/>
        <dbReference type="ChEBI" id="CHEBI:58315"/>
        <dbReference type="ChEBI" id="CHEBI:78442"/>
        <dbReference type="ChEBI" id="CHEBI:78536"/>
        <dbReference type="ChEBI" id="CHEBI:456215"/>
        <dbReference type="EC" id="6.1.1.1"/>
    </reaction>
</comment>
<comment type="subunit">
    <text evidence="1">Homodimer.</text>
</comment>
<comment type="subcellular location">
    <subcellularLocation>
        <location evidence="1">Cytoplasm</location>
    </subcellularLocation>
</comment>
<comment type="similarity">
    <text evidence="1">Belongs to the class-I aminoacyl-tRNA synthetase family. TyrS type 1 subfamily.</text>
</comment>
<sequence>MSVPTHQQDLIALLEERGFVHQCTDRDGLAAHLAAGPATAYLGFDATADSLHVGHLQGLMLMRWLQKAGHRPLLLIGGATTRIGDPSFRDSSRPILTEAQIQANIDGIARVFSRYVELHDDSLVNNAEWLDGVGYLEFLDRVGRHFSINRLLTFDAIRQRLDREHSLSFLEFGYTLLQAYDFVELSRRRGCTLQLGGADQWANIINGVELSRRQGGAQLFGLTMPLLATSDGRKMGKSAQGAVWLNAERLAPFDFWQFWRNCDDRDVGRFLALFSELPMDEVRRLGALQGAELNEAKVVLANAATALAHGEHAARSAADAARGVFADGTRDSGLPVMKLSRARLAQGLSLTDLLLEHAIQPSRSAVRRLAAGGGLRLDGTPVSDPDTPLAGEVDGLRLSLGKKQHLHLRLED</sequence>
<feature type="chain" id="PRO_0000234753" description="Tyrosine--tRNA ligase 1">
    <location>
        <begin position="1"/>
        <end position="412"/>
    </location>
</feature>
<feature type="domain" description="S4 RNA-binding" evidence="1">
    <location>
        <begin position="348"/>
        <end position="411"/>
    </location>
</feature>
<feature type="short sequence motif" description="'HIGH' region">
    <location>
        <begin position="46"/>
        <end position="55"/>
    </location>
</feature>
<feature type="short sequence motif" description="'KMSKS' region">
    <location>
        <begin position="234"/>
        <end position="238"/>
    </location>
</feature>
<feature type="binding site" evidence="1">
    <location>
        <position position="41"/>
    </location>
    <ligand>
        <name>L-tyrosine</name>
        <dbReference type="ChEBI" id="CHEBI:58315"/>
    </ligand>
</feature>
<feature type="binding site" evidence="1">
    <location>
        <position position="174"/>
    </location>
    <ligand>
        <name>L-tyrosine</name>
        <dbReference type="ChEBI" id="CHEBI:58315"/>
    </ligand>
</feature>
<feature type="binding site" evidence="1">
    <location>
        <position position="178"/>
    </location>
    <ligand>
        <name>L-tyrosine</name>
        <dbReference type="ChEBI" id="CHEBI:58315"/>
    </ligand>
</feature>
<feature type="binding site" evidence="1">
    <location>
        <position position="237"/>
    </location>
    <ligand>
        <name>ATP</name>
        <dbReference type="ChEBI" id="CHEBI:30616"/>
    </ligand>
</feature>
<protein>
    <recommendedName>
        <fullName evidence="1">Tyrosine--tRNA ligase 1</fullName>
        <ecNumber evidence="1">6.1.1.1</ecNumber>
    </recommendedName>
    <alternativeName>
        <fullName evidence="1">Tyrosyl-tRNA synthetase 1</fullName>
        <shortName evidence="1">TyrRS 1</shortName>
    </alternativeName>
</protein>
<evidence type="ECO:0000255" key="1">
    <source>
        <dbReference type="HAMAP-Rule" id="MF_02006"/>
    </source>
</evidence>
<accession>Q9HWP3</accession>
<gene>
    <name evidence="1" type="primary">tyrS1</name>
    <name type="ordered locus">PA4138</name>
</gene>
<name>SYY1_PSEAE</name>
<keyword id="KW-0030">Aminoacyl-tRNA synthetase</keyword>
<keyword id="KW-0067">ATP-binding</keyword>
<keyword id="KW-0963">Cytoplasm</keyword>
<keyword id="KW-0436">Ligase</keyword>
<keyword id="KW-0547">Nucleotide-binding</keyword>
<keyword id="KW-0648">Protein biosynthesis</keyword>
<keyword id="KW-1185">Reference proteome</keyword>
<keyword id="KW-0694">RNA-binding</keyword>
<organism>
    <name type="scientific">Pseudomonas aeruginosa (strain ATCC 15692 / DSM 22644 / CIP 104116 / JCM 14847 / LMG 12228 / 1C / PRS 101 / PAO1)</name>
    <dbReference type="NCBI Taxonomy" id="208964"/>
    <lineage>
        <taxon>Bacteria</taxon>
        <taxon>Pseudomonadati</taxon>
        <taxon>Pseudomonadota</taxon>
        <taxon>Gammaproteobacteria</taxon>
        <taxon>Pseudomonadales</taxon>
        <taxon>Pseudomonadaceae</taxon>
        <taxon>Pseudomonas</taxon>
    </lineage>
</organism>